<gene>
    <name evidence="1" type="primary">rpmB</name>
    <name type="ordered locus">BF2429</name>
</gene>
<dbReference type="EMBL" id="AP006841">
    <property type="protein sequence ID" value="BAD49178.1"/>
    <property type="molecule type" value="Genomic_DNA"/>
</dbReference>
<dbReference type="RefSeq" id="WP_005787937.1">
    <property type="nucleotide sequence ID" value="NZ_UYXF01000005.1"/>
</dbReference>
<dbReference type="RefSeq" id="YP_099712.1">
    <property type="nucleotide sequence ID" value="NC_006347.1"/>
</dbReference>
<dbReference type="SMR" id="Q64TK1"/>
<dbReference type="STRING" id="295405.BF2429"/>
<dbReference type="GeneID" id="60369535"/>
<dbReference type="KEGG" id="bfr:BF2429"/>
<dbReference type="PATRIC" id="fig|295405.11.peg.2347"/>
<dbReference type="HOGENOM" id="CLU_064548_3_1_10"/>
<dbReference type="OrthoDB" id="9805609at2"/>
<dbReference type="Proteomes" id="UP000002197">
    <property type="component" value="Chromosome"/>
</dbReference>
<dbReference type="GO" id="GO:1990904">
    <property type="term" value="C:ribonucleoprotein complex"/>
    <property type="evidence" value="ECO:0007669"/>
    <property type="project" value="UniProtKB-KW"/>
</dbReference>
<dbReference type="GO" id="GO:0005840">
    <property type="term" value="C:ribosome"/>
    <property type="evidence" value="ECO:0007669"/>
    <property type="project" value="UniProtKB-KW"/>
</dbReference>
<dbReference type="GO" id="GO:0003735">
    <property type="term" value="F:structural constituent of ribosome"/>
    <property type="evidence" value="ECO:0007669"/>
    <property type="project" value="InterPro"/>
</dbReference>
<dbReference type="GO" id="GO:0006412">
    <property type="term" value="P:translation"/>
    <property type="evidence" value="ECO:0007669"/>
    <property type="project" value="UniProtKB-UniRule"/>
</dbReference>
<dbReference type="FunFam" id="2.30.170.40:FF:000004">
    <property type="entry name" value="50S ribosomal protein L28"/>
    <property type="match status" value="1"/>
</dbReference>
<dbReference type="Gene3D" id="2.30.170.40">
    <property type="entry name" value="Ribosomal protein L28/L24"/>
    <property type="match status" value="1"/>
</dbReference>
<dbReference type="HAMAP" id="MF_00373">
    <property type="entry name" value="Ribosomal_bL28"/>
    <property type="match status" value="1"/>
</dbReference>
<dbReference type="InterPro" id="IPR026569">
    <property type="entry name" value="Ribosomal_bL28"/>
</dbReference>
<dbReference type="InterPro" id="IPR034704">
    <property type="entry name" value="Ribosomal_bL28/bL31-like_sf"/>
</dbReference>
<dbReference type="InterPro" id="IPR001383">
    <property type="entry name" value="Ribosomal_bL28_bact-type"/>
</dbReference>
<dbReference type="InterPro" id="IPR037147">
    <property type="entry name" value="Ribosomal_bL28_sf"/>
</dbReference>
<dbReference type="NCBIfam" id="TIGR00009">
    <property type="entry name" value="L28"/>
    <property type="match status" value="1"/>
</dbReference>
<dbReference type="PANTHER" id="PTHR13528">
    <property type="entry name" value="39S RIBOSOMAL PROTEIN L28, MITOCHONDRIAL"/>
    <property type="match status" value="1"/>
</dbReference>
<dbReference type="PANTHER" id="PTHR13528:SF2">
    <property type="entry name" value="LARGE RIBOSOMAL SUBUNIT PROTEIN BL28M"/>
    <property type="match status" value="1"/>
</dbReference>
<dbReference type="Pfam" id="PF00830">
    <property type="entry name" value="Ribosomal_L28"/>
    <property type="match status" value="1"/>
</dbReference>
<dbReference type="SUPFAM" id="SSF143800">
    <property type="entry name" value="L28p-like"/>
    <property type="match status" value="1"/>
</dbReference>
<keyword id="KW-0687">Ribonucleoprotein</keyword>
<keyword id="KW-0689">Ribosomal protein</keyword>
<accession>Q64TK1</accession>
<name>RL28_BACFR</name>
<comment type="similarity">
    <text evidence="1">Belongs to the bacterial ribosomal protein bL28 family.</text>
</comment>
<reference key="1">
    <citation type="journal article" date="2004" name="Proc. Natl. Acad. Sci. U.S.A.">
        <title>Genomic analysis of Bacteroides fragilis reveals extensive DNA inversions regulating cell surface adaptation.</title>
        <authorList>
            <person name="Kuwahara T."/>
            <person name="Yamashita A."/>
            <person name="Hirakawa H."/>
            <person name="Nakayama H."/>
            <person name="Toh H."/>
            <person name="Okada N."/>
            <person name="Kuhara S."/>
            <person name="Hattori M."/>
            <person name="Hayashi T."/>
            <person name="Ohnishi Y."/>
        </authorList>
    </citation>
    <scope>NUCLEOTIDE SEQUENCE [LARGE SCALE GENOMIC DNA]</scope>
    <source>
        <strain>YCH46</strain>
    </source>
</reference>
<evidence type="ECO:0000255" key="1">
    <source>
        <dbReference type="HAMAP-Rule" id="MF_00373"/>
    </source>
</evidence>
<evidence type="ECO:0000305" key="2"/>
<sequence>MSKICQITGKKAMIGNNVSHSKRRTKRTFDLNLFNKKFYYVEQDCWISLSLCAAGLRIINKKGLDAALNDAVAKGYCDWKTIKVVG</sequence>
<protein>
    <recommendedName>
        <fullName evidence="1">Large ribosomal subunit protein bL28</fullName>
    </recommendedName>
    <alternativeName>
        <fullName evidence="2">50S ribosomal protein L28</fullName>
    </alternativeName>
</protein>
<feature type="chain" id="PRO_0000178425" description="Large ribosomal subunit protein bL28">
    <location>
        <begin position="1"/>
        <end position="86"/>
    </location>
</feature>
<organism>
    <name type="scientific">Bacteroides fragilis (strain YCH46)</name>
    <dbReference type="NCBI Taxonomy" id="295405"/>
    <lineage>
        <taxon>Bacteria</taxon>
        <taxon>Pseudomonadati</taxon>
        <taxon>Bacteroidota</taxon>
        <taxon>Bacteroidia</taxon>
        <taxon>Bacteroidales</taxon>
        <taxon>Bacteroidaceae</taxon>
        <taxon>Bacteroides</taxon>
    </lineage>
</organism>
<proteinExistence type="inferred from homology"/>